<protein>
    <recommendedName>
        <fullName>CDGSH iron-sulfur domain-containing protein NEET</fullName>
        <shortName>At-NEET</shortName>
    </recommendedName>
</protein>
<organism>
    <name type="scientific">Arabidopsis thaliana</name>
    <name type="common">Mouse-ear cress</name>
    <dbReference type="NCBI Taxonomy" id="3702"/>
    <lineage>
        <taxon>Eukaryota</taxon>
        <taxon>Viridiplantae</taxon>
        <taxon>Streptophyta</taxon>
        <taxon>Embryophyta</taxon>
        <taxon>Tracheophyta</taxon>
        <taxon>Spermatophyta</taxon>
        <taxon>Magnoliopsida</taxon>
        <taxon>eudicotyledons</taxon>
        <taxon>Gunneridae</taxon>
        <taxon>Pentapetalae</taxon>
        <taxon>rosids</taxon>
        <taxon>malvids</taxon>
        <taxon>Brassicales</taxon>
        <taxon>Brassicaceae</taxon>
        <taxon>Camelineae</taxon>
        <taxon>Arabidopsis</taxon>
    </lineage>
</organism>
<sequence length="108" mass="11626">MAIIASTFGTGLSYAGELPFKPVTGGEVGRKQQRMVVVRAEGGGGINPEIRKNEDKVVDSVVVTELSKNITPYCRCWRSGTFPLCDGSHVKHNKANGDNVGPLLLKKQ</sequence>
<feature type="chain" id="PRO_0000424630" description="CDGSH iron-sulfur domain-containing protein NEET">
    <location>
        <begin position="1"/>
        <end position="108"/>
    </location>
</feature>
<feature type="binding site">
    <location>
        <position position="74"/>
    </location>
    <ligand>
        <name>[2Fe-2S] cluster</name>
        <dbReference type="ChEBI" id="CHEBI:190135"/>
    </ligand>
</feature>
<feature type="binding site">
    <location>
        <position position="76"/>
    </location>
    <ligand>
        <name>[2Fe-2S] cluster</name>
        <dbReference type="ChEBI" id="CHEBI:190135"/>
    </ligand>
</feature>
<feature type="binding site">
    <location>
        <position position="85"/>
    </location>
    <ligand>
        <name>[2Fe-2S] cluster</name>
        <dbReference type="ChEBI" id="CHEBI:190135"/>
    </ligand>
</feature>
<feature type="binding site">
    <location>
        <position position="89"/>
    </location>
    <ligand>
        <name>[2Fe-2S] cluster</name>
        <dbReference type="ChEBI" id="CHEBI:190135"/>
    </ligand>
</feature>
<feature type="mutagenesis site" description="Increases 2Fe-2S cluster stability 10 fold. Loss of iron-sulfur transfer activity." evidence="1">
    <original>H</original>
    <variation>C</variation>
    <location>
        <position position="89"/>
    </location>
</feature>
<feature type="sequence conflict" description="In Ref. 4; AAM63719." evidence="2" ref="4">
    <original>W</original>
    <variation>R</variation>
    <location>
        <position position="77"/>
    </location>
</feature>
<feature type="sequence conflict" description="In Ref. 4; AAM63719." evidence="2" ref="4">
    <original>Q</original>
    <variation>L</variation>
    <location>
        <position position="108"/>
    </location>
</feature>
<feature type="turn" evidence="3">
    <location>
        <begin position="50"/>
        <end position="53"/>
    </location>
</feature>
<feature type="strand" evidence="3">
    <location>
        <begin position="54"/>
        <end position="56"/>
    </location>
</feature>
<feature type="strand" evidence="3">
    <location>
        <begin position="59"/>
        <end position="62"/>
    </location>
</feature>
<feature type="helix" evidence="3">
    <location>
        <begin position="63"/>
        <end position="65"/>
    </location>
</feature>
<feature type="strand" evidence="3">
    <location>
        <begin position="68"/>
        <end position="73"/>
    </location>
</feature>
<feature type="strand" evidence="3">
    <location>
        <begin position="75"/>
        <end position="77"/>
    </location>
</feature>
<feature type="turn" evidence="3">
    <location>
        <begin position="80"/>
        <end position="83"/>
    </location>
</feature>
<feature type="helix" evidence="3">
    <location>
        <begin position="88"/>
        <end position="96"/>
    </location>
</feature>
<feature type="strand" evidence="3">
    <location>
        <begin position="100"/>
        <end position="106"/>
    </location>
</feature>
<reference key="1">
    <citation type="journal article" date="1998" name="DNA Res.">
        <title>Structural analysis of Arabidopsis thaliana chromosome 5. IV. Sequence features of the regions of 1,456,315 bp covered by nineteen physically assigned P1 and TAC clones.</title>
        <authorList>
            <person name="Sato S."/>
            <person name="Kaneko T."/>
            <person name="Kotani H."/>
            <person name="Nakamura Y."/>
            <person name="Asamizu E."/>
            <person name="Miyajima N."/>
            <person name="Tabata S."/>
        </authorList>
    </citation>
    <scope>NUCLEOTIDE SEQUENCE [LARGE SCALE GENOMIC DNA]</scope>
    <source>
        <strain>cv. Columbia</strain>
    </source>
</reference>
<reference key="2">
    <citation type="journal article" date="2017" name="Plant J.">
        <title>Araport11: a complete reannotation of the Arabidopsis thaliana reference genome.</title>
        <authorList>
            <person name="Cheng C.Y."/>
            <person name="Krishnakumar V."/>
            <person name="Chan A.P."/>
            <person name="Thibaud-Nissen F."/>
            <person name="Schobel S."/>
            <person name="Town C.D."/>
        </authorList>
    </citation>
    <scope>GENOME REANNOTATION</scope>
    <source>
        <strain>cv. Columbia</strain>
    </source>
</reference>
<reference key="3">
    <citation type="journal article" date="2003" name="Science">
        <title>Empirical analysis of transcriptional activity in the Arabidopsis genome.</title>
        <authorList>
            <person name="Yamada K."/>
            <person name="Lim J."/>
            <person name="Dale J.M."/>
            <person name="Chen H."/>
            <person name="Shinn P."/>
            <person name="Palm C.J."/>
            <person name="Southwick A.M."/>
            <person name="Wu H.C."/>
            <person name="Kim C.J."/>
            <person name="Nguyen M."/>
            <person name="Pham P.K."/>
            <person name="Cheuk R.F."/>
            <person name="Karlin-Newmann G."/>
            <person name="Liu S.X."/>
            <person name="Lam B."/>
            <person name="Sakano H."/>
            <person name="Wu T."/>
            <person name="Yu G."/>
            <person name="Miranda M."/>
            <person name="Quach H.L."/>
            <person name="Tripp M."/>
            <person name="Chang C.H."/>
            <person name="Lee J.M."/>
            <person name="Toriumi M.J."/>
            <person name="Chan M.M."/>
            <person name="Tang C.C."/>
            <person name="Onodera C.S."/>
            <person name="Deng J.M."/>
            <person name="Akiyama K."/>
            <person name="Ansari Y."/>
            <person name="Arakawa T."/>
            <person name="Banh J."/>
            <person name="Banno F."/>
            <person name="Bowser L."/>
            <person name="Brooks S.Y."/>
            <person name="Carninci P."/>
            <person name="Chao Q."/>
            <person name="Choy N."/>
            <person name="Enju A."/>
            <person name="Goldsmith A.D."/>
            <person name="Gurjal M."/>
            <person name="Hansen N.F."/>
            <person name="Hayashizaki Y."/>
            <person name="Johnson-Hopson C."/>
            <person name="Hsuan V.W."/>
            <person name="Iida K."/>
            <person name="Karnes M."/>
            <person name="Khan S."/>
            <person name="Koesema E."/>
            <person name="Ishida J."/>
            <person name="Jiang P.X."/>
            <person name="Jones T."/>
            <person name="Kawai J."/>
            <person name="Kamiya A."/>
            <person name="Meyers C."/>
            <person name="Nakajima M."/>
            <person name="Narusaka M."/>
            <person name="Seki M."/>
            <person name="Sakurai T."/>
            <person name="Satou M."/>
            <person name="Tamse R."/>
            <person name="Vaysberg M."/>
            <person name="Wallender E.K."/>
            <person name="Wong C."/>
            <person name="Yamamura Y."/>
            <person name="Yuan S."/>
            <person name="Shinozaki K."/>
            <person name="Davis R.W."/>
            <person name="Theologis A."/>
            <person name="Ecker J.R."/>
        </authorList>
    </citation>
    <scope>NUCLEOTIDE SEQUENCE [LARGE SCALE MRNA]</scope>
    <source>
        <strain>cv. Columbia</strain>
    </source>
</reference>
<reference key="4">
    <citation type="submission" date="2002-03" db="EMBL/GenBank/DDBJ databases">
        <title>Full-length cDNA from Arabidopsis thaliana.</title>
        <authorList>
            <person name="Brover V.V."/>
            <person name="Troukhan M.E."/>
            <person name="Alexandrov N.A."/>
            <person name="Lu Y.-P."/>
            <person name="Flavell R.B."/>
            <person name="Feldmann K.A."/>
        </authorList>
    </citation>
    <scope>NUCLEOTIDE SEQUENCE [LARGE SCALE MRNA]</scope>
</reference>
<reference key="5">
    <citation type="journal article" date="2012" name="Plant Cell">
        <title>Characterization of Arabidopsis NEET reveals an ancient role for NEET proteins in iron metabolism.</title>
        <authorList>
            <person name="Nechushtai R."/>
            <person name="Conlan A.R."/>
            <person name="Harir Y."/>
            <person name="Song L."/>
            <person name="Yogev O."/>
            <person name="Eisenberg-Domovich Y."/>
            <person name="Livnah O."/>
            <person name="Michaeli D."/>
            <person name="Rosen R."/>
            <person name="Ma V."/>
            <person name="Luo Y."/>
            <person name="Zuris J.A."/>
            <person name="Paddock M.L."/>
            <person name="Cabantchik Z.I."/>
            <person name="Jennings P.A."/>
            <person name="Mittler R."/>
        </authorList>
    </citation>
    <scope>X-RAY CRYSTALLOGRAPHY (1.14 ANGSTROMS) OF 30-108 IN COMPLEX WITH 2FE-2S CLUSTER</scope>
    <scope>FUNCTION</scope>
    <scope>SUBUNIT</scope>
    <scope>SUBCELLULAR LOCATION</scope>
    <scope>DISRUPTION PHENOTYPE</scope>
    <scope>MUTAGENESIS OF HIS-89</scope>
</reference>
<comment type="function">
    <text evidence="1">Plays an important role in plant development, senescence, reactive oxygen homeostasis, and iron metabolism. Acts as an iron-sulfur transfer protein.</text>
</comment>
<comment type="cofactor">
    <cofactor>
        <name>[2Fe-2S] cluster</name>
        <dbReference type="ChEBI" id="CHEBI:190135"/>
    </cofactor>
    <text>Binds 1 [2Fe-2S] cluster per subunit.</text>
</comment>
<comment type="subunit">
    <text evidence="1">Homodimer.</text>
</comment>
<comment type="subcellular location">
    <subcellularLocation>
        <location evidence="1">Plastid</location>
        <location evidence="1">Chloroplast</location>
    </subcellularLocation>
    <subcellularLocation>
        <location evidence="1">Mitochondrion</location>
    </subcellularLocation>
</comment>
<comment type="disruption phenotype">
    <text evidence="1">Late bolting, early senescence and increased tolerance to abiotic stress.</text>
</comment>
<comment type="similarity">
    <text evidence="2">Belongs to the CISD protein family.</text>
</comment>
<proteinExistence type="evidence at protein level"/>
<dbReference type="EMBL" id="AB010074">
    <property type="protein sequence ID" value="BAB11241.1"/>
    <property type="molecule type" value="Genomic_DNA"/>
</dbReference>
<dbReference type="EMBL" id="CP002688">
    <property type="protein sequence ID" value="AED96119.1"/>
    <property type="molecule type" value="Genomic_DNA"/>
</dbReference>
<dbReference type="EMBL" id="AF372888">
    <property type="protein sequence ID" value="AAK49604.1"/>
    <property type="molecule type" value="mRNA"/>
</dbReference>
<dbReference type="EMBL" id="AY057716">
    <property type="protein sequence ID" value="AAL15346.1"/>
    <property type="molecule type" value="mRNA"/>
</dbReference>
<dbReference type="EMBL" id="AY086662">
    <property type="protein sequence ID" value="AAM63719.1"/>
    <property type="molecule type" value="mRNA"/>
</dbReference>
<dbReference type="RefSeq" id="NP_568764.1">
    <property type="nucleotide sequence ID" value="NM_124551.5"/>
</dbReference>
<dbReference type="PDB" id="3S2Q">
    <property type="method" value="X-ray"/>
    <property type="resolution" value="1.75 A"/>
    <property type="chains" value="A/B=30-108"/>
</dbReference>
<dbReference type="PDB" id="3S2R">
    <property type="method" value="X-ray"/>
    <property type="resolution" value="1.14 A"/>
    <property type="chains" value="A/B=30-108"/>
</dbReference>
<dbReference type="PDBsum" id="3S2Q"/>
<dbReference type="PDBsum" id="3S2R"/>
<dbReference type="SMR" id="Q9FLI7"/>
<dbReference type="FunCoup" id="Q9FLI7">
    <property type="interactions" value="2178"/>
</dbReference>
<dbReference type="STRING" id="3702.Q9FLI7"/>
<dbReference type="PaxDb" id="3702-AT5G51720.1"/>
<dbReference type="ProteomicsDB" id="250822"/>
<dbReference type="DNASU" id="835246"/>
<dbReference type="EnsemblPlants" id="AT5G51720.1">
    <property type="protein sequence ID" value="AT5G51720.1"/>
    <property type="gene ID" value="AT5G51720"/>
</dbReference>
<dbReference type="GeneID" id="835246"/>
<dbReference type="Gramene" id="AT5G51720.1">
    <property type="protein sequence ID" value="AT5G51720.1"/>
    <property type="gene ID" value="AT5G51720"/>
</dbReference>
<dbReference type="KEGG" id="ath:AT5G51720"/>
<dbReference type="Araport" id="AT5G51720"/>
<dbReference type="TAIR" id="AT5G51720">
    <property type="gene designation" value="NEET"/>
</dbReference>
<dbReference type="eggNOG" id="KOG3461">
    <property type="taxonomic scope" value="Eukaryota"/>
</dbReference>
<dbReference type="HOGENOM" id="CLU_132293_0_0_1"/>
<dbReference type="InParanoid" id="Q9FLI7"/>
<dbReference type="OMA" id="GLTSCGH"/>
<dbReference type="OrthoDB" id="449252at2759"/>
<dbReference type="PhylomeDB" id="Q9FLI7"/>
<dbReference type="EvolutionaryTrace" id="Q9FLI7"/>
<dbReference type="PRO" id="PR:Q9FLI7"/>
<dbReference type="Proteomes" id="UP000006548">
    <property type="component" value="Chromosome 5"/>
</dbReference>
<dbReference type="ExpressionAtlas" id="Q9FLI7">
    <property type="expression patterns" value="baseline and differential"/>
</dbReference>
<dbReference type="GO" id="GO:0009507">
    <property type="term" value="C:chloroplast"/>
    <property type="evidence" value="ECO:0000314"/>
    <property type="project" value="TAIR"/>
</dbReference>
<dbReference type="GO" id="GO:0009570">
    <property type="term" value="C:chloroplast stroma"/>
    <property type="evidence" value="ECO:0007005"/>
    <property type="project" value="TAIR"/>
</dbReference>
<dbReference type="GO" id="GO:0005829">
    <property type="term" value="C:cytosol"/>
    <property type="evidence" value="ECO:0007005"/>
    <property type="project" value="TAIR"/>
</dbReference>
<dbReference type="GO" id="GO:0005739">
    <property type="term" value="C:mitochondrion"/>
    <property type="evidence" value="ECO:0000314"/>
    <property type="project" value="TAIR"/>
</dbReference>
<dbReference type="GO" id="GO:0009536">
    <property type="term" value="C:plastid"/>
    <property type="evidence" value="ECO:0007005"/>
    <property type="project" value="TAIR"/>
</dbReference>
<dbReference type="GO" id="GO:0051537">
    <property type="term" value="F:2 iron, 2 sulfur cluster binding"/>
    <property type="evidence" value="ECO:0000353"/>
    <property type="project" value="TAIR"/>
</dbReference>
<dbReference type="GO" id="GO:0046872">
    <property type="term" value="F:metal ion binding"/>
    <property type="evidence" value="ECO:0007669"/>
    <property type="project" value="UniProtKB-KW"/>
</dbReference>
<dbReference type="GO" id="GO:0010150">
    <property type="term" value="P:leaf senescence"/>
    <property type="evidence" value="ECO:0000315"/>
    <property type="project" value="TAIR"/>
</dbReference>
<dbReference type="GO" id="GO:0072593">
    <property type="term" value="P:reactive oxygen species metabolic process"/>
    <property type="evidence" value="ECO:0000315"/>
    <property type="project" value="TAIR"/>
</dbReference>
<dbReference type="GO" id="GO:0010506">
    <property type="term" value="P:regulation of autophagy"/>
    <property type="evidence" value="ECO:0007669"/>
    <property type="project" value="InterPro"/>
</dbReference>
<dbReference type="FunFam" id="3.40.5.90:FF:000001">
    <property type="entry name" value="CDGSH iron-sulfur domain-containing protein 1"/>
    <property type="match status" value="1"/>
</dbReference>
<dbReference type="Gene3D" id="3.40.5.90">
    <property type="entry name" value="CDGSH iron-sulfur domain, mitoNEET-type"/>
    <property type="match status" value="1"/>
</dbReference>
<dbReference type="InterPro" id="IPR045131">
    <property type="entry name" value="CISD1/2"/>
</dbReference>
<dbReference type="InterPro" id="IPR018967">
    <property type="entry name" value="FeS-contain_CDGSH-typ"/>
</dbReference>
<dbReference type="InterPro" id="IPR042216">
    <property type="entry name" value="MitoNEET_CISD"/>
</dbReference>
<dbReference type="PANTHER" id="PTHR13680">
    <property type="entry name" value="CDGSH IRON-SULFUR DOMAIN-CONTAINING PROTEIN 1"/>
    <property type="match status" value="1"/>
</dbReference>
<dbReference type="PANTHER" id="PTHR13680:SF5">
    <property type="entry name" value="CDGSH IRON-SULFUR DOMAIN-CONTAINING PROTEIN 1"/>
    <property type="match status" value="1"/>
</dbReference>
<dbReference type="Pfam" id="PF09360">
    <property type="entry name" value="zf-CDGSH"/>
    <property type="match status" value="1"/>
</dbReference>
<dbReference type="SMART" id="SM00704">
    <property type="entry name" value="ZnF_CDGSH"/>
    <property type="match status" value="1"/>
</dbReference>
<accession>Q9FLI7</accession>
<accession>Q8LCD5</accession>
<keyword id="KW-0001">2Fe-2S</keyword>
<keyword id="KW-0002">3D-structure</keyword>
<keyword id="KW-0150">Chloroplast</keyword>
<keyword id="KW-0408">Iron</keyword>
<keyword id="KW-0411">Iron-sulfur</keyword>
<keyword id="KW-0479">Metal-binding</keyword>
<keyword id="KW-0496">Mitochondrion</keyword>
<keyword id="KW-0934">Plastid</keyword>
<keyword id="KW-1185">Reference proteome</keyword>
<gene>
    <name type="primary">NEET</name>
    <name type="ordered locus">At5g51720</name>
    <name type="ORF">MIO24.14</name>
</gene>
<evidence type="ECO:0000269" key="1">
    <source>
    </source>
</evidence>
<evidence type="ECO:0000305" key="2"/>
<evidence type="ECO:0007829" key="3">
    <source>
        <dbReference type="PDB" id="3S2R"/>
    </source>
</evidence>
<name>NEET_ARATH</name>